<organism>
    <name type="scientific">Brucella melitensis biotype 1 (strain ATCC 23456 / CCUG 17765 / NCTC 10094 / 16M)</name>
    <dbReference type="NCBI Taxonomy" id="224914"/>
    <lineage>
        <taxon>Bacteria</taxon>
        <taxon>Pseudomonadati</taxon>
        <taxon>Pseudomonadota</taxon>
        <taxon>Alphaproteobacteria</taxon>
        <taxon>Hyphomicrobiales</taxon>
        <taxon>Brucellaceae</taxon>
        <taxon>Brucella/Ochrobactrum group</taxon>
        <taxon>Brucella</taxon>
    </lineage>
</organism>
<evidence type="ECO:0000255" key="1">
    <source>
        <dbReference type="HAMAP-Rule" id="MF_00104"/>
    </source>
</evidence>
<gene>
    <name evidence="1" type="primary">rnc</name>
    <name type="ordered locus">BMEI1287</name>
</gene>
<sequence>MNRTRPLPEIKMVSANKTASILEERTGHRFLNLKRLERALTHSSVQAPARANYERLEFLGDRVLGLTVAEMLFEAFPEASEGELSVRLNALVNAETCAAIADEIGLADLIHTGSDIKSLNDKRLLNVRADVVEALIATIYLDGGLEAARSFIQRYWKKRSLETGAARRDAKTELQEWAHQQGNVHPVYAILSRSGPDHDPLFLVEVTVKGFAPEKGEGRSKRIAEQSAAEAMLYREGVWKRDGSA</sequence>
<accession>P66664</accession>
<accession>Q8YG74</accession>
<comment type="function">
    <text evidence="1">Digests double-stranded RNA. Involved in the processing of primary rRNA transcript to yield the immediate precursors to the large and small rRNAs (23S and 16S). Processes some mRNAs, and tRNAs when they are encoded in the rRNA operon. Processes pre-crRNA and tracrRNA of type II CRISPR loci if present in the organism.</text>
</comment>
<comment type="catalytic activity">
    <reaction evidence="1">
        <text>Endonucleolytic cleavage to 5'-phosphomonoester.</text>
        <dbReference type="EC" id="3.1.26.3"/>
    </reaction>
</comment>
<comment type="cofactor">
    <cofactor evidence="1">
        <name>Mg(2+)</name>
        <dbReference type="ChEBI" id="CHEBI:18420"/>
    </cofactor>
</comment>
<comment type="subunit">
    <text evidence="1">Homodimer.</text>
</comment>
<comment type="subcellular location">
    <subcellularLocation>
        <location evidence="1">Cytoplasm</location>
    </subcellularLocation>
</comment>
<comment type="similarity">
    <text evidence="1">Belongs to the ribonuclease III family.</text>
</comment>
<dbReference type="EC" id="3.1.26.3" evidence="1"/>
<dbReference type="EMBL" id="AE008917">
    <property type="protein sequence ID" value="AAL52468.1"/>
    <property type="molecule type" value="Genomic_DNA"/>
</dbReference>
<dbReference type="PIR" id="AI3412">
    <property type="entry name" value="AI3412"/>
</dbReference>
<dbReference type="SMR" id="P66664"/>
<dbReference type="KEGG" id="bme:BMEI1287"/>
<dbReference type="eggNOG" id="COG0571">
    <property type="taxonomic scope" value="Bacteria"/>
</dbReference>
<dbReference type="Proteomes" id="UP000000419">
    <property type="component" value="Chromosome I"/>
</dbReference>
<dbReference type="GO" id="GO:0005737">
    <property type="term" value="C:cytoplasm"/>
    <property type="evidence" value="ECO:0007669"/>
    <property type="project" value="UniProtKB-SubCell"/>
</dbReference>
<dbReference type="GO" id="GO:0003725">
    <property type="term" value="F:double-stranded RNA binding"/>
    <property type="evidence" value="ECO:0007669"/>
    <property type="project" value="TreeGrafter"/>
</dbReference>
<dbReference type="GO" id="GO:0046872">
    <property type="term" value="F:metal ion binding"/>
    <property type="evidence" value="ECO:0007669"/>
    <property type="project" value="UniProtKB-KW"/>
</dbReference>
<dbReference type="GO" id="GO:0004525">
    <property type="term" value="F:ribonuclease III activity"/>
    <property type="evidence" value="ECO:0007669"/>
    <property type="project" value="UniProtKB-UniRule"/>
</dbReference>
<dbReference type="GO" id="GO:0019843">
    <property type="term" value="F:rRNA binding"/>
    <property type="evidence" value="ECO:0007669"/>
    <property type="project" value="UniProtKB-KW"/>
</dbReference>
<dbReference type="GO" id="GO:0006397">
    <property type="term" value="P:mRNA processing"/>
    <property type="evidence" value="ECO:0007669"/>
    <property type="project" value="UniProtKB-UniRule"/>
</dbReference>
<dbReference type="GO" id="GO:0010468">
    <property type="term" value="P:regulation of gene expression"/>
    <property type="evidence" value="ECO:0007669"/>
    <property type="project" value="TreeGrafter"/>
</dbReference>
<dbReference type="GO" id="GO:0006364">
    <property type="term" value="P:rRNA processing"/>
    <property type="evidence" value="ECO:0007669"/>
    <property type="project" value="UniProtKB-UniRule"/>
</dbReference>
<dbReference type="GO" id="GO:0008033">
    <property type="term" value="P:tRNA processing"/>
    <property type="evidence" value="ECO:0007669"/>
    <property type="project" value="UniProtKB-KW"/>
</dbReference>
<dbReference type="CDD" id="cd10845">
    <property type="entry name" value="DSRM_RNAse_III_family"/>
    <property type="match status" value="1"/>
</dbReference>
<dbReference type="CDD" id="cd00593">
    <property type="entry name" value="RIBOc"/>
    <property type="match status" value="1"/>
</dbReference>
<dbReference type="FunFam" id="3.30.160.20:FF:000003">
    <property type="entry name" value="Ribonuclease 3"/>
    <property type="match status" value="1"/>
</dbReference>
<dbReference type="Gene3D" id="3.30.160.20">
    <property type="match status" value="1"/>
</dbReference>
<dbReference type="Gene3D" id="1.10.1520.10">
    <property type="entry name" value="Ribonuclease III domain"/>
    <property type="match status" value="1"/>
</dbReference>
<dbReference type="HAMAP" id="MF_00104">
    <property type="entry name" value="RNase_III"/>
    <property type="match status" value="1"/>
</dbReference>
<dbReference type="InterPro" id="IPR014720">
    <property type="entry name" value="dsRBD_dom"/>
</dbReference>
<dbReference type="InterPro" id="IPR011907">
    <property type="entry name" value="RNase_III"/>
</dbReference>
<dbReference type="InterPro" id="IPR000999">
    <property type="entry name" value="RNase_III_dom"/>
</dbReference>
<dbReference type="InterPro" id="IPR036389">
    <property type="entry name" value="RNase_III_sf"/>
</dbReference>
<dbReference type="NCBIfam" id="TIGR02191">
    <property type="entry name" value="RNaseIII"/>
    <property type="match status" value="1"/>
</dbReference>
<dbReference type="PANTHER" id="PTHR11207:SF0">
    <property type="entry name" value="RIBONUCLEASE 3"/>
    <property type="match status" value="1"/>
</dbReference>
<dbReference type="PANTHER" id="PTHR11207">
    <property type="entry name" value="RIBONUCLEASE III"/>
    <property type="match status" value="1"/>
</dbReference>
<dbReference type="Pfam" id="PF00035">
    <property type="entry name" value="dsrm"/>
    <property type="match status" value="1"/>
</dbReference>
<dbReference type="Pfam" id="PF14622">
    <property type="entry name" value="Ribonucleas_3_3"/>
    <property type="match status" value="1"/>
</dbReference>
<dbReference type="SMART" id="SM00358">
    <property type="entry name" value="DSRM"/>
    <property type="match status" value="1"/>
</dbReference>
<dbReference type="SMART" id="SM00535">
    <property type="entry name" value="RIBOc"/>
    <property type="match status" value="1"/>
</dbReference>
<dbReference type="SUPFAM" id="SSF54768">
    <property type="entry name" value="dsRNA-binding domain-like"/>
    <property type="match status" value="1"/>
</dbReference>
<dbReference type="SUPFAM" id="SSF69065">
    <property type="entry name" value="RNase III domain-like"/>
    <property type="match status" value="1"/>
</dbReference>
<dbReference type="PROSITE" id="PS50137">
    <property type="entry name" value="DS_RBD"/>
    <property type="match status" value="1"/>
</dbReference>
<dbReference type="PROSITE" id="PS00517">
    <property type="entry name" value="RNASE_3_1"/>
    <property type="match status" value="1"/>
</dbReference>
<dbReference type="PROSITE" id="PS50142">
    <property type="entry name" value="RNASE_3_2"/>
    <property type="match status" value="1"/>
</dbReference>
<protein>
    <recommendedName>
        <fullName evidence="1">Ribonuclease 3</fullName>
        <ecNumber evidence="1">3.1.26.3</ecNumber>
    </recommendedName>
    <alternativeName>
        <fullName evidence="1">Ribonuclease III</fullName>
        <shortName evidence="1">RNase III</shortName>
    </alternativeName>
</protein>
<proteinExistence type="inferred from homology"/>
<feature type="chain" id="PRO_0000180378" description="Ribonuclease 3">
    <location>
        <begin position="1"/>
        <end position="245"/>
    </location>
</feature>
<feature type="domain" description="RNase III" evidence="1">
    <location>
        <begin position="19"/>
        <end position="144"/>
    </location>
</feature>
<feature type="domain" description="DRBM" evidence="1">
    <location>
        <begin position="169"/>
        <end position="238"/>
    </location>
</feature>
<feature type="active site" evidence="1">
    <location>
        <position position="61"/>
    </location>
</feature>
<feature type="active site" evidence="1">
    <location>
        <position position="133"/>
    </location>
</feature>
<feature type="binding site" evidence="1">
    <location>
        <position position="57"/>
    </location>
    <ligand>
        <name>Mg(2+)</name>
        <dbReference type="ChEBI" id="CHEBI:18420"/>
    </ligand>
</feature>
<feature type="binding site" evidence="1">
    <location>
        <position position="130"/>
    </location>
    <ligand>
        <name>Mg(2+)</name>
        <dbReference type="ChEBI" id="CHEBI:18420"/>
    </ligand>
</feature>
<feature type="binding site" evidence="1">
    <location>
        <position position="133"/>
    </location>
    <ligand>
        <name>Mg(2+)</name>
        <dbReference type="ChEBI" id="CHEBI:18420"/>
    </ligand>
</feature>
<reference key="1">
    <citation type="journal article" date="2002" name="Proc. Natl. Acad. Sci. U.S.A.">
        <title>The genome sequence of the facultative intracellular pathogen Brucella melitensis.</title>
        <authorList>
            <person name="DelVecchio V.G."/>
            <person name="Kapatral V."/>
            <person name="Redkar R.J."/>
            <person name="Patra G."/>
            <person name="Mujer C."/>
            <person name="Los T."/>
            <person name="Ivanova N."/>
            <person name="Anderson I."/>
            <person name="Bhattacharyya A."/>
            <person name="Lykidis A."/>
            <person name="Reznik G."/>
            <person name="Jablonski L."/>
            <person name="Larsen N."/>
            <person name="D'Souza M."/>
            <person name="Bernal A."/>
            <person name="Mazur M."/>
            <person name="Goltsman E."/>
            <person name="Selkov E."/>
            <person name="Elzer P.H."/>
            <person name="Hagius S."/>
            <person name="O'Callaghan D."/>
            <person name="Letesson J.-J."/>
            <person name="Haselkorn R."/>
            <person name="Kyrpides N.C."/>
            <person name="Overbeek R."/>
        </authorList>
    </citation>
    <scope>NUCLEOTIDE SEQUENCE [LARGE SCALE GENOMIC DNA]</scope>
    <source>
        <strain>ATCC 23456 / CCUG 17765 / NCTC 10094 / 16M</strain>
    </source>
</reference>
<name>RNC_BRUME</name>
<keyword id="KW-0963">Cytoplasm</keyword>
<keyword id="KW-0255">Endonuclease</keyword>
<keyword id="KW-0378">Hydrolase</keyword>
<keyword id="KW-0460">Magnesium</keyword>
<keyword id="KW-0479">Metal-binding</keyword>
<keyword id="KW-0507">mRNA processing</keyword>
<keyword id="KW-0540">Nuclease</keyword>
<keyword id="KW-0694">RNA-binding</keyword>
<keyword id="KW-0698">rRNA processing</keyword>
<keyword id="KW-0699">rRNA-binding</keyword>
<keyword id="KW-0819">tRNA processing</keyword>